<dbReference type="EC" id="1.8.5.-" evidence="1"/>
<dbReference type="EMBL" id="CP001138">
    <property type="protein sequence ID" value="ACH50299.1"/>
    <property type="molecule type" value="Genomic_DNA"/>
</dbReference>
<dbReference type="RefSeq" id="WP_000723877.1">
    <property type="nucleotide sequence ID" value="NC_011149.1"/>
</dbReference>
<dbReference type="SMR" id="B5F7N7"/>
<dbReference type="KEGG" id="sea:SeAg_B3568"/>
<dbReference type="HOGENOM" id="CLU_045520_0_0_6"/>
<dbReference type="Proteomes" id="UP000008819">
    <property type="component" value="Chromosome"/>
</dbReference>
<dbReference type="GO" id="GO:0042597">
    <property type="term" value="C:periplasmic space"/>
    <property type="evidence" value="ECO:0007669"/>
    <property type="project" value="UniProtKB-SubCell"/>
</dbReference>
<dbReference type="GO" id="GO:0046872">
    <property type="term" value="F:metal ion binding"/>
    <property type="evidence" value="ECO:0007669"/>
    <property type="project" value="UniProtKB-KW"/>
</dbReference>
<dbReference type="GO" id="GO:0043546">
    <property type="term" value="F:molybdopterin cofactor binding"/>
    <property type="evidence" value="ECO:0007669"/>
    <property type="project" value="UniProtKB-UniRule"/>
</dbReference>
<dbReference type="GO" id="GO:0016672">
    <property type="term" value="F:oxidoreductase activity, acting on a sulfur group of donors, quinone or similar compound as acceptor"/>
    <property type="evidence" value="ECO:0007669"/>
    <property type="project" value="UniProtKB-UniRule"/>
</dbReference>
<dbReference type="GO" id="GO:0030091">
    <property type="term" value="P:protein repair"/>
    <property type="evidence" value="ECO:0007669"/>
    <property type="project" value="UniProtKB-UniRule"/>
</dbReference>
<dbReference type="CDD" id="cd02107">
    <property type="entry name" value="YedY_like_Moco"/>
    <property type="match status" value="1"/>
</dbReference>
<dbReference type="FunFam" id="3.90.420.10:FF:000001">
    <property type="entry name" value="Protein-methionine-sulfoxide reductase catalytic subunit MsrP"/>
    <property type="match status" value="1"/>
</dbReference>
<dbReference type="Gene3D" id="3.90.420.10">
    <property type="entry name" value="Oxidoreductase, molybdopterin-binding domain"/>
    <property type="match status" value="1"/>
</dbReference>
<dbReference type="HAMAP" id="MF_01206">
    <property type="entry name" value="MsrP"/>
    <property type="match status" value="1"/>
</dbReference>
<dbReference type="InterPro" id="IPR022867">
    <property type="entry name" value="MsrP"/>
</dbReference>
<dbReference type="InterPro" id="IPR000572">
    <property type="entry name" value="OxRdtase_Mopterin-bd_dom"/>
</dbReference>
<dbReference type="InterPro" id="IPR036374">
    <property type="entry name" value="OxRdtase_Mopterin-bd_sf"/>
</dbReference>
<dbReference type="InterPro" id="IPR006311">
    <property type="entry name" value="TAT_signal"/>
</dbReference>
<dbReference type="NCBIfam" id="NF003767">
    <property type="entry name" value="PRK05363.1"/>
    <property type="match status" value="1"/>
</dbReference>
<dbReference type="PANTHER" id="PTHR43032">
    <property type="entry name" value="PROTEIN-METHIONINE-SULFOXIDE REDUCTASE"/>
    <property type="match status" value="1"/>
</dbReference>
<dbReference type="PANTHER" id="PTHR43032:SF3">
    <property type="entry name" value="PROTEIN-METHIONINE-SULFOXIDE REDUCTASE CATALYTIC SUBUNIT MSRP"/>
    <property type="match status" value="1"/>
</dbReference>
<dbReference type="Pfam" id="PF00174">
    <property type="entry name" value="Oxidored_molyb"/>
    <property type="match status" value="1"/>
</dbReference>
<dbReference type="SUPFAM" id="SSF56524">
    <property type="entry name" value="Oxidoreductase molybdopterin-binding domain"/>
    <property type="match status" value="1"/>
</dbReference>
<dbReference type="PROSITE" id="PS51318">
    <property type="entry name" value="TAT"/>
    <property type="match status" value="1"/>
</dbReference>
<proteinExistence type="inferred from homology"/>
<name>MSRP_SALA4</name>
<feature type="signal peptide" description="Tat-type signal" evidence="1">
    <location>
        <begin position="1"/>
        <end position="44"/>
    </location>
</feature>
<feature type="chain" id="PRO_1000138720" description="Protein-methionine-sulfoxide reductase catalytic subunit MsrP" evidence="1">
    <location>
        <begin position="45"/>
        <end position="334"/>
    </location>
</feature>
<feature type="binding site" evidence="1">
    <location>
        <position position="88"/>
    </location>
    <ligand>
        <name>Mo-molybdopterin</name>
        <dbReference type="ChEBI" id="CHEBI:71302"/>
    </ligand>
</feature>
<feature type="binding site" evidence="1">
    <location>
        <begin position="91"/>
        <end position="92"/>
    </location>
    <ligand>
        <name>Mo-molybdopterin</name>
        <dbReference type="ChEBI" id="CHEBI:71302"/>
    </ligand>
</feature>
<feature type="binding site" evidence="1">
    <location>
        <position position="146"/>
    </location>
    <ligand>
        <name>Mo-molybdopterin</name>
        <dbReference type="ChEBI" id="CHEBI:71302"/>
    </ligand>
    <ligandPart>
        <name>Mo</name>
        <dbReference type="ChEBI" id="CHEBI:28685"/>
    </ligandPart>
</feature>
<feature type="binding site" evidence="1">
    <location>
        <position position="181"/>
    </location>
    <ligand>
        <name>Mo-molybdopterin</name>
        <dbReference type="ChEBI" id="CHEBI:71302"/>
    </ligand>
</feature>
<feature type="binding site" evidence="1">
    <location>
        <position position="233"/>
    </location>
    <ligand>
        <name>Mo-molybdopterin</name>
        <dbReference type="ChEBI" id="CHEBI:71302"/>
    </ligand>
</feature>
<feature type="binding site" evidence="1">
    <location>
        <position position="238"/>
    </location>
    <ligand>
        <name>Mo-molybdopterin</name>
        <dbReference type="ChEBI" id="CHEBI:71302"/>
    </ligand>
</feature>
<feature type="binding site" evidence="1">
    <location>
        <begin position="249"/>
        <end position="251"/>
    </location>
    <ligand>
        <name>Mo-molybdopterin</name>
        <dbReference type="ChEBI" id="CHEBI:71302"/>
    </ligand>
</feature>
<sequence length="334" mass="37478">MKKIRPLTEADVTAESAFFMQRRQVLKALGISAAALSLPSTAQADLFSWFKGNDRPKAPAGKPLEFSQPAAWRSDLALTPEDKVTGYNNFYEFGLDKADPAANAGSLKTEPWTLKISGEVAKPFTLDYDDLTHRFPLEERIYRMRCVEAWSMVVPWIGFPLYKLLAQAQPTSHAKYVAFETLYAPDDMPGQKDRFIGGGLKYPYVEGLRLDEAMHPLTLMTVGVYGKALPPQNGAPIRLIVPWKYGFKGIKSVVSIKLTRERPPTTWNLSAPNEYGFYANVNPHVDHPRWSQATERFIGSGGILDVQRQPTLLFNGYANEVASLYRGLNLRENF</sequence>
<comment type="function">
    <text evidence="1">Part of the MsrPQ system that repairs oxidized periplasmic proteins containing methionine sulfoxide residues (Met-O), using respiratory chain electrons. Thus protects these proteins from oxidative-stress damage caused by reactive species of oxygen and chlorine generated by the host defense mechanisms. MsrPQ is essential for the maintenance of envelope integrity under bleach stress, rescuing a wide series of structurally unrelated periplasmic proteins from methionine oxidation, including the primary periplasmic chaperone SurA and the lipoprotein Pal. The catalytic subunit MsrP is non-stereospecific, being able to reduce both (R-) and (S-) diastereoisomers of methionine sulfoxide.</text>
</comment>
<comment type="catalytic activity">
    <reaction evidence="1">
        <text>L-methionyl-[protein] + a quinone + H2O = L-methionyl-(S)-S-oxide-[protein] + a quinol</text>
        <dbReference type="Rhea" id="RHEA:51292"/>
        <dbReference type="Rhea" id="RHEA-COMP:12313"/>
        <dbReference type="Rhea" id="RHEA-COMP:12315"/>
        <dbReference type="ChEBI" id="CHEBI:15377"/>
        <dbReference type="ChEBI" id="CHEBI:16044"/>
        <dbReference type="ChEBI" id="CHEBI:24646"/>
        <dbReference type="ChEBI" id="CHEBI:44120"/>
        <dbReference type="ChEBI" id="CHEBI:132124"/>
    </reaction>
</comment>
<comment type="catalytic activity">
    <reaction evidence="1">
        <text>L-methionyl-[protein] + a quinone + H2O = L-methionyl-(R)-S-oxide-[protein] + a quinol</text>
        <dbReference type="Rhea" id="RHEA:51296"/>
        <dbReference type="Rhea" id="RHEA-COMP:12313"/>
        <dbReference type="Rhea" id="RHEA-COMP:12314"/>
        <dbReference type="ChEBI" id="CHEBI:15377"/>
        <dbReference type="ChEBI" id="CHEBI:16044"/>
        <dbReference type="ChEBI" id="CHEBI:24646"/>
        <dbReference type="ChEBI" id="CHEBI:45764"/>
        <dbReference type="ChEBI" id="CHEBI:132124"/>
    </reaction>
</comment>
<comment type="cofactor">
    <cofactor evidence="1">
        <name>Mo-molybdopterin</name>
        <dbReference type="ChEBI" id="CHEBI:71302"/>
    </cofactor>
    <text evidence="1">Binds 1 Mo-molybdopterin (Mo-MPT) cofactor per subunit.</text>
</comment>
<comment type="subunit">
    <text evidence="1">Heterodimer of a catalytic subunit (MsrP) and a heme-binding subunit (MsrQ).</text>
</comment>
<comment type="subcellular location">
    <subcellularLocation>
        <location evidence="1">Periplasm</location>
    </subcellularLocation>
    <text evidence="1">Is attached to the inner membrane when interacting with the MsrQ subunit.</text>
</comment>
<comment type="PTM">
    <text evidence="1">Predicted to be exported by the Tat system. The position of the signal peptide cleavage has not been experimentally proven.</text>
</comment>
<comment type="similarity">
    <text evidence="1">Belongs to the MsrP family.</text>
</comment>
<keyword id="KW-0479">Metal-binding</keyword>
<keyword id="KW-0500">Molybdenum</keyword>
<keyword id="KW-0560">Oxidoreductase</keyword>
<keyword id="KW-0574">Periplasm</keyword>
<keyword id="KW-0732">Signal</keyword>
<organism>
    <name type="scientific">Salmonella agona (strain SL483)</name>
    <dbReference type="NCBI Taxonomy" id="454166"/>
    <lineage>
        <taxon>Bacteria</taxon>
        <taxon>Pseudomonadati</taxon>
        <taxon>Pseudomonadota</taxon>
        <taxon>Gammaproteobacteria</taxon>
        <taxon>Enterobacterales</taxon>
        <taxon>Enterobacteriaceae</taxon>
        <taxon>Salmonella</taxon>
    </lineage>
</organism>
<reference key="1">
    <citation type="journal article" date="2011" name="J. Bacteriol.">
        <title>Comparative genomics of 28 Salmonella enterica isolates: evidence for CRISPR-mediated adaptive sublineage evolution.</title>
        <authorList>
            <person name="Fricke W.F."/>
            <person name="Mammel M.K."/>
            <person name="McDermott P.F."/>
            <person name="Tartera C."/>
            <person name="White D.G."/>
            <person name="Leclerc J.E."/>
            <person name="Ravel J."/>
            <person name="Cebula T.A."/>
        </authorList>
    </citation>
    <scope>NUCLEOTIDE SEQUENCE [LARGE SCALE GENOMIC DNA]</scope>
    <source>
        <strain>SL483</strain>
    </source>
</reference>
<gene>
    <name evidence="1" type="primary">msrP</name>
    <name type="ordered locus">SeAg_B3568</name>
</gene>
<accession>B5F7N7</accession>
<evidence type="ECO:0000255" key="1">
    <source>
        <dbReference type="HAMAP-Rule" id="MF_01206"/>
    </source>
</evidence>
<protein>
    <recommendedName>
        <fullName evidence="1">Protein-methionine-sulfoxide reductase catalytic subunit MsrP</fullName>
        <ecNumber evidence="1">1.8.5.-</ecNumber>
    </recommendedName>
</protein>